<keyword id="KW-0004">4Fe-4S</keyword>
<keyword id="KW-0997">Cell inner membrane</keyword>
<keyword id="KW-1003">Cell membrane</keyword>
<keyword id="KW-0408">Iron</keyword>
<keyword id="KW-0411">Iron-sulfur</keyword>
<keyword id="KW-0472">Membrane</keyword>
<keyword id="KW-0479">Metal-binding</keyword>
<keyword id="KW-0520">NAD</keyword>
<keyword id="KW-0874">Quinone</keyword>
<keyword id="KW-1185">Reference proteome</keyword>
<keyword id="KW-0677">Repeat</keyword>
<keyword id="KW-1278">Translocase</keyword>
<keyword id="KW-0830">Ubiquinone</keyword>
<protein>
    <recommendedName>
        <fullName evidence="1">NADH-quinone oxidoreductase subunit I</fullName>
        <ecNumber evidence="1">7.1.1.-</ecNumber>
    </recommendedName>
    <alternativeName>
        <fullName evidence="1">NADH dehydrogenase I subunit I</fullName>
    </alternativeName>
    <alternativeName>
        <fullName evidence="1">NDH-1 subunit I</fullName>
    </alternativeName>
</protein>
<gene>
    <name evidence="1" type="primary">nuoI</name>
    <name type="ordered locus">AZC_1676</name>
</gene>
<organism>
    <name type="scientific">Azorhizobium caulinodans (strain ATCC 43989 / DSM 5975 / JCM 20966 / LMG 6465 / NBRC 14845 / NCIMB 13405 / ORS 571)</name>
    <dbReference type="NCBI Taxonomy" id="438753"/>
    <lineage>
        <taxon>Bacteria</taxon>
        <taxon>Pseudomonadati</taxon>
        <taxon>Pseudomonadota</taxon>
        <taxon>Alphaproteobacteria</taxon>
        <taxon>Hyphomicrobiales</taxon>
        <taxon>Xanthobacteraceae</taxon>
        <taxon>Azorhizobium</taxon>
    </lineage>
</organism>
<evidence type="ECO:0000255" key="1">
    <source>
        <dbReference type="HAMAP-Rule" id="MF_01351"/>
    </source>
</evidence>
<proteinExistence type="inferred from homology"/>
<feature type="chain" id="PRO_1000073376" description="NADH-quinone oxidoreductase subunit I">
    <location>
        <begin position="1"/>
        <end position="162"/>
    </location>
</feature>
<feature type="domain" description="4Fe-4S ferredoxin-type 1" evidence="1">
    <location>
        <begin position="52"/>
        <end position="82"/>
    </location>
</feature>
<feature type="domain" description="4Fe-4S ferredoxin-type 2" evidence="1">
    <location>
        <begin position="93"/>
        <end position="122"/>
    </location>
</feature>
<feature type="binding site" evidence="1">
    <location>
        <position position="62"/>
    </location>
    <ligand>
        <name>[4Fe-4S] cluster</name>
        <dbReference type="ChEBI" id="CHEBI:49883"/>
        <label>1</label>
    </ligand>
</feature>
<feature type="binding site" evidence="1">
    <location>
        <position position="65"/>
    </location>
    <ligand>
        <name>[4Fe-4S] cluster</name>
        <dbReference type="ChEBI" id="CHEBI:49883"/>
        <label>1</label>
    </ligand>
</feature>
<feature type="binding site" evidence="1">
    <location>
        <position position="68"/>
    </location>
    <ligand>
        <name>[4Fe-4S] cluster</name>
        <dbReference type="ChEBI" id="CHEBI:49883"/>
        <label>1</label>
    </ligand>
</feature>
<feature type="binding site" evidence="1">
    <location>
        <position position="72"/>
    </location>
    <ligand>
        <name>[4Fe-4S] cluster</name>
        <dbReference type="ChEBI" id="CHEBI:49883"/>
        <label>2</label>
    </ligand>
</feature>
<feature type="binding site" evidence="1">
    <location>
        <position position="102"/>
    </location>
    <ligand>
        <name>[4Fe-4S] cluster</name>
        <dbReference type="ChEBI" id="CHEBI:49883"/>
        <label>2</label>
    </ligand>
</feature>
<feature type="binding site" evidence="1">
    <location>
        <position position="105"/>
    </location>
    <ligand>
        <name>[4Fe-4S] cluster</name>
        <dbReference type="ChEBI" id="CHEBI:49883"/>
        <label>2</label>
    </ligand>
</feature>
<feature type="binding site" evidence="1">
    <location>
        <position position="108"/>
    </location>
    <ligand>
        <name>[4Fe-4S] cluster</name>
        <dbReference type="ChEBI" id="CHEBI:49883"/>
        <label>2</label>
    </ligand>
</feature>
<feature type="binding site" evidence="1">
    <location>
        <position position="112"/>
    </location>
    <ligand>
        <name>[4Fe-4S] cluster</name>
        <dbReference type="ChEBI" id="CHEBI:49883"/>
        <label>1</label>
    </ligand>
</feature>
<reference key="1">
    <citation type="submission" date="2007-04" db="EMBL/GenBank/DDBJ databases">
        <title>Complete genome sequence of the nitrogen-fixing bacterium Azorhizobium caulinodans ORS571.</title>
        <authorList>
            <person name="Lee K.B."/>
            <person name="Backer P.D."/>
            <person name="Aono T."/>
            <person name="Liu C.T."/>
            <person name="Suzuki S."/>
            <person name="Suzuki T."/>
            <person name="Kaneko T."/>
            <person name="Yamada M."/>
            <person name="Tabata S."/>
            <person name="Kupfer D.M."/>
            <person name="Najar F.Z."/>
            <person name="Wiley G.B."/>
            <person name="Roe B."/>
            <person name="Binnewies T."/>
            <person name="Ussery D."/>
            <person name="Vereecke D."/>
            <person name="Gevers D."/>
            <person name="Holsters M."/>
            <person name="Oyaizu H."/>
        </authorList>
    </citation>
    <scope>NUCLEOTIDE SEQUENCE [LARGE SCALE GENOMIC DNA]</scope>
    <source>
        <strain>ATCC 43989 / DSM 5975 / JCM 20966 / LMG 6465 / NBRC 14845 / NCIMB 13405 / ORS 571</strain>
    </source>
</reference>
<dbReference type="EC" id="7.1.1.-" evidence="1"/>
<dbReference type="EMBL" id="AP009384">
    <property type="protein sequence ID" value="BAF87674.1"/>
    <property type="molecule type" value="Genomic_DNA"/>
</dbReference>
<dbReference type="RefSeq" id="WP_012170204.1">
    <property type="nucleotide sequence ID" value="NC_009937.1"/>
</dbReference>
<dbReference type="SMR" id="A8I407"/>
<dbReference type="STRING" id="438753.AZC_1676"/>
<dbReference type="KEGG" id="azc:AZC_1676"/>
<dbReference type="eggNOG" id="COG1143">
    <property type="taxonomic scope" value="Bacteria"/>
</dbReference>
<dbReference type="HOGENOM" id="CLU_067218_5_1_5"/>
<dbReference type="Proteomes" id="UP000000270">
    <property type="component" value="Chromosome"/>
</dbReference>
<dbReference type="GO" id="GO:0005886">
    <property type="term" value="C:plasma membrane"/>
    <property type="evidence" value="ECO:0007669"/>
    <property type="project" value="UniProtKB-SubCell"/>
</dbReference>
<dbReference type="GO" id="GO:0051539">
    <property type="term" value="F:4 iron, 4 sulfur cluster binding"/>
    <property type="evidence" value="ECO:0007669"/>
    <property type="project" value="UniProtKB-KW"/>
</dbReference>
<dbReference type="GO" id="GO:0005506">
    <property type="term" value="F:iron ion binding"/>
    <property type="evidence" value="ECO:0007669"/>
    <property type="project" value="UniProtKB-UniRule"/>
</dbReference>
<dbReference type="GO" id="GO:0050136">
    <property type="term" value="F:NADH:ubiquinone reductase (non-electrogenic) activity"/>
    <property type="evidence" value="ECO:0007669"/>
    <property type="project" value="UniProtKB-UniRule"/>
</dbReference>
<dbReference type="GO" id="GO:0048038">
    <property type="term" value="F:quinone binding"/>
    <property type="evidence" value="ECO:0007669"/>
    <property type="project" value="UniProtKB-KW"/>
</dbReference>
<dbReference type="GO" id="GO:0009060">
    <property type="term" value="P:aerobic respiration"/>
    <property type="evidence" value="ECO:0007669"/>
    <property type="project" value="TreeGrafter"/>
</dbReference>
<dbReference type="FunFam" id="3.30.70.3270:FF:000001">
    <property type="entry name" value="NADH-quinone oxidoreductase subunit I 1"/>
    <property type="match status" value="1"/>
</dbReference>
<dbReference type="Gene3D" id="3.30.70.3270">
    <property type="match status" value="1"/>
</dbReference>
<dbReference type="HAMAP" id="MF_01351">
    <property type="entry name" value="NDH1_NuoI"/>
    <property type="match status" value="1"/>
</dbReference>
<dbReference type="InterPro" id="IPR017896">
    <property type="entry name" value="4Fe4S_Fe-S-bd"/>
</dbReference>
<dbReference type="InterPro" id="IPR017900">
    <property type="entry name" value="4Fe4S_Fe_S_CS"/>
</dbReference>
<dbReference type="InterPro" id="IPR010226">
    <property type="entry name" value="NADH_quinone_OxRdtase_chainI"/>
</dbReference>
<dbReference type="NCBIfam" id="TIGR01971">
    <property type="entry name" value="NuoI"/>
    <property type="match status" value="1"/>
</dbReference>
<dbReference type="NCBIfam" id="NF004538">
    <property type="entry name" value="PRK05888.1-4"/>
    <property type="match status" value="1"/>
</dbReference>
<dbReference type="NCBIfam" id="NF004539">
    <property type="entry name" value="PRK05888.1-5"/>
    <property type="match status" value="1"/>
</dbReference>
<dbReference type="PANTHER" id="PTHR10849:SF20">
    <property type="entry name" value="NADH DEHYDROGENASE [UBIQUINONE] IRON-SULFUR PROTEIN 8, MITOCHONDRIAL"/>
    <property type="match status" value="1"/>
</dbReference>
<dbReference type="PANTHER" id="PTHR10849">
    <property type="entry name" value="NADH DEHYDROGENASE UBIQUINONE IRON-SULFUR PROTEIN 8, MITOCHONDRIAL"/>
    <property type="match status" value="1"/>
</dbReference>
<dbReference type="Pfam" id="PF12838">
    <property type="entry name" value="Fer4_7"/>
    <property type="match status" value="1"/>
</dbReference>
<dbReference type="SUPFAM" id="SSF54862">
    <property type="entry name" value="4Fe-4S ferredoxins"/>
    <property type="match status" value="1"/>
</dbReference>
<dbReference type="PROSITE" id="PS00198">
    <property type="entry name" value="4FE4S_FER_1"/>
    <property type="match status" value="2"/>
</dbReference>
<dbReference type="PROSITE" id="PS51379">
    <property type="entry name" value="4FE4S_FER_2"/>
    <property type="match status" value="2"/>
</dbReference>
<sequence length="162" mass="18678">MKLDQAARALFLTELVSGFFLAMRYFFKPKATINYPFEKNPISPRFRGEHALRRYPNGEERCIACKLCEAICPAQAITIEAGPRRNDGTRRTTRYDIDMVKCIYCGFCQEACPVDAIVEGPNFEFATETREELYYDKEKLLANGDRWEREIARAIAADAPYR</sequence>
<comment type="function">
    <text evidence="1">NDH-1 shuttles electrons from NADH, via FMN and iron-sulfur (Fe-S) centers, to quinones in the respiratory chain. The immediate electron acceptor for the enzyme in this species is believed to be ubiquinone. Couples the redox reaction to proton translocation (for every two electrons transferred, four hydrogen ions are translocated across the cytoplasmic membrane), and thus conserves the redox energy in a proton gradient.</text>
</comment>
<comment type="catalytic activity">
    <reaction evidence="1">
        <text>a quinone + NADH + 5 H(+)(in) = a quinol + NAD(+) + 4 H(+)(out)</text>
        <dbReference type="Rhea" id="RHEA:57888"/>
        <dbReference type="ChEBI" id="CHEBI:15378"/>
        <dbReference type="ChEBI" id="CHEBI:24646"/>
        <dbReference type="ChEBI" id="CHEBI:57540"/>
        <dbReference type="ChEBI" id="CHEBI:57945"/>
        <dbReference type="ChEBI" id="CHEBI:132124"/>
    </reaction>
</comment>
<comment type="cofactor">
    <cofactor evidence="1">
        <name>[4Fe-4S] cluster</name>
        <dbReference type="ChEBI" id="CHEBI:49883"/>
    </cofactor>
    <text evidence="1">Binds 2 [4Fe-4S] clusters per subunit.</text>
</comment>
<comment type="subunit">
    <text evidence="1">NDH-1 is composed of 14 different subunits. Subunits NuoA, H, J, K, L, M, N constitute the membrane sector of the complex.</text>
</comment>
<comment type="subcellular location">
    <subcellularLocation>
        <location evidence="1">Cell inner membrane</location>
        <topology evidence="1">Peripheral membrane protein</topology>
    </subcellularLocation>
</comment>
<comment type="similarity">
    <text evidence="1">Belongs to the complex I 23 kDa subunit family.</text>
</comment>
<accession>A8I407</accession>
<name>NUOI_AZOC5</name>